<reference key="1">
    <citation type="submission" date="2005-10" db="EMBL/GenBank/DDBJ databases">
        <title>Complete sequence of Pelobacter carbinolicus DSM 2380.</title>
        <authorList>
            <person name="Copeland A."/>
            <person name="Lucas S."/>
            <person name="Lapidus A."/>
            <person name="Barry K."/>
            <person name="Detter J.C."/>
            <person name="Glavina T."/>
            <person name="Hammon N."/>
            <person name="Israni S."/>
            <person name="Pitluck S."/>
            <person name="Chertkov O."/>
            <person name="Schmutz J."/>
            <person name="Larimer F."/>
            <person name="Land M."/>
            <person name="Kyrpides N."/>
            <person name="Ivanova N."/>
            <person name="Richardson P."/>
        </authorList>
    </citation>
    <scope>NUCLEOTIDE SEQUENCE [LARGE SCALE GENOMIC DNA]</scope>
    <source>
        <strain>DSM 2380 / NBRC 103641 / GraBd1</strain>
    </source>
</reference>
<accession>Q3A1E0</accession>
<gene>
    <name evidence="1" type="primary">proA</name>
    <name type="ordered locus">Pcar_2579</name>
</gene>
<evidence type="ECO:0000255" key="1">
    <source>
        <dbReference type="HAMAP-Rule" id="MF_00412"/>
    </source>
</evidence>
<name>PROA_SYNC1</name>
<comment type="function">
    <text evidence="1">Catalyzes the NADPH-dependent reduction of L-glutamate 5-phosphate into L-glutamate 5-semialdehyde and phosphate. The product spontaneously undergoes cyclization to form 1-pyrroline-5-carboxylate.</text>
</comment>
<comment type="catalytic activity">
    <reaction evidence="1">
        <text>L-glutamate 5-semialdehyde + phosphate + NADP(+) = L-glutamyl 5-phosphate + NADPH + H(+)</text>
        <dbReference type="Rhea" id="RHEA:19541"/>
        <dbReference type="ChEBI" id="CHEBI:15378"/>
        <dbReference type="ChEBI" id="CHEBI:43474"/>
        <dbReference type="ChEBI" id="CHEBI:57783"/>
        <dbReference type="ChEBI" id="CHEBI:58066"/>
        <dbReference type="ChEBI" id="CHEBI:58274"/>
        <dbReference type="ChEBI" id="CHEBI:58349"/>
        <dbReference type="EC" id="1.2.1.41"/>
    </reaction>
</comment>
<comment type="pathway">
    <text evidence="1">Amino-acid biosynthesis; L-proline biosynthesis; L-glutamate 5-semialdehyde from L-glutamate: step 2/2.</text>
</comment>
<comment type="subcellular location">
    <subcellularLocation>
        <location evidence="1">Cytoplasm</location>
    </subcellularLocation>
</comment>
<comment type="similarity">
    <text evidence="1">Belongs to the gamma-glutamyl phosphate reductase family.</text>
</comment>
<keyword id="KW-0028">Amino-acid biosynthesis</keyword>
<keyword id="KW-0963">Cytoplasm</keyword>
<keyword id="KW-0521">NADP</keyword>
<keyword id="KW-0560">Oxidoreductase</keyword>
<keyword id="KW-0641">Proline biosynthesis</keyword>
<keyword id="KW-1185">Reference proteome</keyword>
<sequence>MTLQDEIKQLAKEARDASRTLAQVSTTVKNDLLKGMADALVAATTALMAENAKDLEAGREKGLSDAMLDRLRLDEARIQGMADGLREVAELPDPVGEVTGMWRRPNGIQVGRMRIPLGVIGIIYESRPNVTADAAGLCLKSGNAVVLRGGSEAIHSNRAIAGVLKGVLAALGLPAGALQLVGTTDRAAVTELLKQEDYIDLIIPRGGEGLIRFVSENSRIPVIKHYKGVCHSFVDADADFDMAEKICVNAKVQRPGVCNAMETLLIHKDAAEVFVPRIARVLGELGVELRGCAETCRLAPGTTPAVDSDWGAEYLDLILAVKVVDGLDAAIAHIQQYSSLHTEVIVTRNYPNSQRFLREINSSVVMVNASSRFSDGNQFGLGAEIGISTTKLHSFGPMGLEDLTTRKFIVFGEGQVRE</sequence>
<dbReference type="EC" id="1.2.1.41" evidence="1"/>
<dbReference type="EMBL" id="CP000142">
    <property type="protein sequence ID" value="ABA89817.1"/>
    <property type="molecule type" value="Genomic_DNA"/>
</dbReference>
<dbReference type="RefSeq" id="WP_011342355.1">
    <property type="nucleotide sequence ID" value="NC_007498.2"/>
</dbReference>
<dbReference type="SMR" id="Q3A1E0"/>
<dbReference type="STRING" id="338963.Pcar_2579"/>
<dbReference type="KEGG" id="pca:Pcar_2579"/>
<dbReference type="eggNOG" id="COG0014">
    <property type="taxonomic scope" value="Bacteria"/>
</dbReference>
<dbReference type="HOGENOM" id="CLU_030231_0_0_7"/>
<dbReference type="OrthoDB" id="9809970at2"/>
<dbReference type="UniPathway" id="UPA00098">
    <property type="reaction ID" value="UER00360"/>
</dbReference>
<dbReference type="Proteomes" id="UP000002534">
    <property type="component" value="Chromosome"/>
</dbReference>
<dbReference type="GO" id="GO:0005737">
    <property type="term" value="C:cytoplasm"/>
    <property type="evidence" value="ECO:0007669"/>
    <property type="project" value="UniProtKB-SubCell"/>
</dbReference>
<dbReference type="GO" id="GO:0004350">
    <property type="term" value="F:glutamate-5-semialdehyde dehydrogenase activity"/>
    <property type="evidence" value="ECO:0007669"/>
    <property type="project" value="UniProtKB-UniRule"/>
</dbReference>
<dbReference type="GO" id="GO:0050661">
    <property type="term" value="F:NADP binding"/>
    <property type="evidence" value="ECO:0007669"/>
    <property type="project" value="InterPro"/>
</dbReference>
<dbReference type="GO" id="GO:0055129">
    <property type="term" value="P:L-proline biosynthetic process"/>
    <property type="evidence" value="ECO:0007669"/>
    <property type="project" value="UniProtKB-UniRule"/>
</dbReference>
<dbReference type="CDD" id="cd07079">
    <property type="entry name" value="ALDH_F18-19_ProA-GPR"/>
    <property type="match status" value="1"/>
</dbReference>
<dbReference type="FunFam" id="3.40.309.10:FF:000006">
    <property type="entry name" value="Gamma-glutamyl phosphate reductase"/>
    <property type="match status" value="1"/>
</dbReference>
<dbReference type="Gene3D" id="3.40.605.10">
    <property type="entry name" value="Aldehyde Dehydrogenase, Chain A, domain 1"/>
    <property type="match status" value="1"/>
</dbReference>
<dbReference type="Gene3D" id="3.40.309.10">
    <property type="entry name" value="Aldehyde Dehydrogenase, Chain A, domain 2"/>
    <property type="match status" value="1"/>
</dbReference>
<dbReference type="HAMAP" id="MF_00412">
    <property type="entry name" value="ProA"/>
    <property type="match status" value="1"/>
</dbReference>
<dbReference type="InterPro" id="IPR016161">
    <property type="entry name" value="Ald_DH/histidinol_DH"/>
</dbReference>
<dbReference type="InterPro" id="IPR016163">
    <property type="entry name" value="Ald_DH_C"/>
</dbReference>
<dbReference type="InterPro" id="IPR016162">
    <property type="entry name" value="Ald_DH_N"/>
</dbReference>
<dbReference type="InterPro" id="IPR015590">
    <property type="entry name" value="Aldehyde_DH_dom"/>
</dbReference>
<dbReference type="InterPro" id="IPR020593">
    <property type="entry name" value="G-glutamylP_reductase_CS"/>
</dbReference>
<dbReference type="InterPro" id="IPR012134">
    <property type="entry name" value="Glu-5-SA_DH"/>
</dbReference>
<dbReference type="InterPro" id="IPR000965">
    <property type="entry name" value="GPR_dom"/>
</dbReference>
<dbReference type="NCBIfam" id="NF001221">
    <property type="entry name" value="PRK00197.1"/>
    <property type="match status" value="1"/>
</dbReference>
<dbReference type="NCBIfam" id="TIGR00407">
    <property type="entry name" value="proA"/>
    <property type="match status" value="1"/>
</dbReference>
<dbReference type="PANTHER" id="PTHR11063:SF8">
    <property type="entry name" value="DELTA-1-PYRROLINE-5-CARBOXYLATE SYNTHASE"/>
    <property type="match status" value="1"/>
</dbReference>
<dbReference type="PANTHER" id="PTHR11063">
    <property type="entry name" value="GLUTAMATE SEMIALDEHYDE DEHYDROGENASE"/>
    <property type="match status" value="1"/>
</dbReference>
<dbReference type="Pfam" id="PF00171">
    <property type="entry name" value="Aldedh"/>
    <property type="match status" value="1"/>
</dbReference>
<dbReference type="PIRSF" id="PIRSF000151">
    <property type="entry name" value="GPR"/>
    <property type="match status" value="1"/>
</dbReference>
<dbReference type="SUPFAM" id="SSF53720">
    <property type="entry name" value="ALDH-like"/>
    <property type="match status" value="1"/>
</dbReference>
<dbReference type="PROSITE" id="PS01223">
    <property type="entry name" value="PROA"/>
    <property type="match status" value="1"/>
</dbReference>
<feature type="chain" id="PRO_0000230009" description="Gamma-glutamyl phosphate reductase">
    <location>
        <begin position="1"/>
        <end position="418"/>
    </location>
</feature>
<protein>
    <recommendedName>
        <fullName evidence="1">Gamma-glutamyl phosphate reductase</fullName>
        <shortName evidence="1">GPR</shortName>
        <ecNumber evidence="1">1.2.1.41</ecNumber>
    </recommendedName>
    <alternativeName>
        <fullName evidence="1">Glutamate-5-semialdehyde dehydrogenase</fullName>
    </alternativeName>
    <alternativeName>
        <fullName evidence="1">Glutamyl-gamma-semialdehyde dehydrogenase</fullName>
        <shortName evidence="1">GSA dehydrogenase</shortName>
    </alternativeName>
</protein>
<organism>
    <name type="scientific">Syntrophotalea carbinolica (strain DSM 2380 / NBRC 103641 / GraBd1)</name>
    <name type="common">Pelobacter carbinolicus</name>
    <dbReference type="NCBI Taxonomy" id="338963"/>
    <lineage>
        <taxon>Bacteria</taxon>
        <taxon>Pseudomonadati</taxon>
        <taxon>Thermodesulfobacteriota</taxon>
        <taxon>Desulfuromonadia</taxon>
        <taxon>Desulfuromonadales</taxon>
        <taxon>Syntrophotaleaceae</taxon>
        <taxon>Syntrophotalea</taxon>
    </lineage>
</organism>
<proteinExistence type="inferred from homology"/>